<accession>Q8K593</accession>
<protein>
    <recommendedName>
        <fullName evidence="7">Phospholipid phosphatase 2</fullName>
        <ecNumber evidence="2">3.1.3.-</ecNumber>
        <ecNumber evidence="2">3.1.3.4</ecNumber>
    </recommendedName>
    <alternativeName>
        <fullName>Lipid phosphate phosphohydrolase 2</fullName>
    </alternativeName>
    <alternativeName>
        <fullName>PAP2-gamma</fullName>
        <shortName>PAP2-G</shortName>
    </alternativeName>
    <alternativeName>
        <fullName>Phosphatidate phosphohydrolase type 2c</fullName>
    </alternativeName>
    <alternativeName>
        <fullName>Phosphatidic acid phosphatase 2c</fullName>
        <shortName>PAP-2c</shortName>
        <shortName>PAP2c</shortName>
    </alternativeName>
</protein>
<name>PLPP2_RAT</name>
<proteinExistence type="evidence at transcript level"/>
<organism>
    <name type="scientific">Rattus norvegicus</name>
    <name type="common">Rat</name>
    <dbReference type="NCBI Taxonomy" id="10116"/>
    <lineage>
        <taxon>Eukaryota</taxon>
        <taxon>Metazoa</taxon>
        <taxon>Chordata</taxon>
        <taxon>Craniata</taxon>
        <taxon>Vertebrata</taxon>
        <taxon>Euteleostomi</taxon>
        <taxon>Mammalia</taxon>
        <taxon>Eutheria</taxon>
        <taxon>Euarchontoglires</taxon>
        <taxon>Glires</taxon>
        <taxon>Rodentia</taxon>
        <taxon>Myomorpha</taxon>
        <taxon>Muroidea</taxon>
        <taxon>Muridae</taxon>
        <taxon>Murinae</taxon>
        <taxon>Rattus</taxon>
    </lineage>
</organism>
<feature type="chain" id="PRO_0000220911" description="Phospholipid phosphatase 2">
    <location>
        <begin position="1"/>
        <end position="276"/>
    </location>
</feature>
<feature type="topological domain" description="Cytoplasmic" evidence="7">
    <location>
        <begin position="1"/>
        <end position="4"/>
    </location>
</feature>
<feature type="transmembrane region" description="Helical" evidence="3">
    <location>
        <begin position="5"/>
        <end position="25"/>
    </location>
</feature>
<feature type="topological domain" description="Lumenal" evidence="7">
    <location>
        <begin position="26"/>
        <end position="51"/>
    </location>
</feature>
<feature type="transmembrane region" description="Helical" evidence="3">
    <location>
        <begin position="52"/>
        <end position="72"/>
    </location>
</feature>
<feature type="topological domain" description="Cytoplasmic" evidence="7">
    <location>
        <begin position="73"/>
        <end position="87"/>
    </location>
</feature>
<feature type="transmembrane region" description="Helical" evidence="3">
    <location>
        <begin position="88"/>
        <end position="108"/>
    </location>
</feature>
<feature type="topological domain" description="Lumenal" evidence="7">
    <location>
        <begin position="109"/>
        <end position="161"/>
    </location>
</feature>
<feature type="transmembrane region" description="Helical" evidence="3">
    <location>
        <begin position="162"/>
        <end position="182"/>
    </location>
</feature>
<feature type="topological domain" description="Cytoplasmic" evidence="7">
    <location>
        <begin position="183"/>
        <end position="189"/>
    </location>
</feature>
<feature type="transmembrane region" description="Helical" evidence="3">
    <location>
        <begin position="190"/>
        <end position="210"/>
    </location>
</feature>
<feature type="topological domain" description="Lumenal" evidence="7">
    <location>
        <begin position="211"/>
        <end position="225"/>
    </location>
</feature>
<feature type="transmembrane region" description="Helical" evidence="3">
    <location>
        <begin position="226"/>
        <end position="246"/>
    </location>
</feature>
<feature type="topological domain" description="Cytoplasmic" evidence="7">
    <location>
        <begin position="247"/>
        <end position="276"/>
    </location>
</feature>
<feature type="region of interest" description="Phosphatase sequence motif I" evidence="1">
    <location>
        <begin position="117"/>
        <end position="125"/>
    </location>
</feature>
<feature type="region of interest" description="Phosphatase sequence motif II" evidence="1">
    <location>
        <begin position="164"/>
        <end position="167"/>
    </location>
</feature>
<feature type="region of interest" description="Phosphatase sequence motif III" evidence="1">
    <location>
        <begin position="212"/>
        <end position="223"/>
    </location>
</feature>
<feature type="region of interest" description="Disordered" evidence="4">
    <location>
        <begin position="252"/>
        <end position="276"/>
    </location>
</feature>
<feature type="active site" description="Proton donors" evidence="1">
    <location>
        <position position="167"/>
    </location>
</feature>
<feature type="active site" description="Nucleophile" evidence="1">
    <location>
        <position position="219"/>
    </location>
</feature>
<feature type="site" description="Stabilizes the active site histidine for nucleophilic attack" evidence="1">
    <location>
        <position position="223"/>
    </location>
</feature>
<feature type="glycosylation site" description="N-linked (GlcNAc...) asparagine" evidence="3">
    <location>
        <position position="139"/>
    </location>
</feature>
<feature type="glycosylation site" description="N-linked (GlcNAc...) asparagine" evidence="3">
    <location>
        <position position="155"/>
    </location>
</feature>
<evidence type="ECO:0000250" key="1">
    <source>
        <dbReference type="UniProtKB" id="O34349"/>
    </source>
</evidence>
<evidence type="ECO:0000250" key="2">
    <source>
        <dbReference type="UniProtKB" id="O43688"/>
    </source>
</evidence>
<evidence type="ECO:0000255" key="3"/>
<evidence type="ECO:0000256" key="4">
    <source>
        <dbReference type="SAM" id="MobiDB-lite"/>
    </source>
</evidence>
<evidence type="ECO:0000269" key="5">
    <source>
    </source>
</evidence>
<evidence type="ECO:0000269" key="6">
    <source>
    </source>
</evidence>
<evidence type="ECO:0000305" key="7"/>
<evidence type="ECO:0000312" key="8">
    <source>
        <dbReference type="RGD" id="628893"/>
    </source>
</evidence>
<reference key="1">
    <citation type="submission" date="2002-04" db="EMBL/GenBank/DDBJ databases">
        <title>Expression of lipid phosphate phosphohydrolase isoforms in rat lung development.</title>
        <authorList>
            <person name="Zhao L."/>
            <person name="Nanjundan M."/>
            <person name="Possmayer F."/>
        </authorList>
    </citation>
    <scope>NUCLEOTIDE SEQUENCE [MRNA]</scope>
    <source>
        <strain>Sprague-Dawley</strain>
        <tissue>Lung</tissue>
    </source>
</reference>
<reference key="2">
    <citation type="journal article" date="2004" name="Genome Res.">
        <title>The status, quality, and expansion of the NIH full-length cDNA project: the Mammalian Gene Collection (MGC).</title>
        <authorList>
            <consortium name="The MGC Project Team"/>
        </authorList>
    </citation>
    <scope>NUCLEOTIDE SEQUENCE [LARGE SCALE MRNA]</scope>
    <source>
        <tissue>Prostate</tissue>
    </source>
</reference>
<reference key="3">
    <citation type="journal article" date="2001" name="Am. J. Physiol.">
        <title>Molecular cloning and expression of pulmonary lipid phosphate phosphohydrolases.</title>
        <authorList>
            <person name="Nanjundan M."/>
            <person name="Possmayer F."/>
        </authorList>
    </citation>
    <scope>TISSUE SPECIFICITY</scope>
    <source>
        <strain>Sprague-Dawley</strain>
    </source>
</reference>
<reference key="4">
    <citation type="journal article" date="2006" name="J. Biol. Chem.">
        <title>Lipid phosphate phosphatase-2 activity regulates S-phase entry of the cell cycle in Rat2 fibroblasts.</title>
        <authorList>
            <person name="Morris K.E."/>
            <person name="Schang L.M."/>
            <person name="Brindley D.N."/>
        </authorList>
    </citation>
    <scope>FUNCTION</scope>
</reference>
<sequence length="276" mass="31101">MERRWVFVLLDVLCVLVASLPFIILTLVNAPYKRGFYCGDDSIRYPYRPDTITHGLMAGVIITATVVLVSSGEAYLVYTDRLYSRSDFNNYVAAIYKVLGTFLFGAAVSQSLTDLAKYMIGRLRPSFLAVCDPDWSRVNCSGYVQVEVCRGSPANVTEARLSFYSGHSSFGMYCMLFLALYVQARLCWKWARLLRPTVQFFLVAFAIYVGYTRVSDNKHHWSDVLVGLLQGALVACLTVCYVSDFFKSRPPQSCQENEESERKPSLSLTLTLGDRP</sequence>
<keyword id="KW-1003">Cell membrane</keyword>
<keyword id="KW-0256">Endoplasmic reticulum</keyword>
<keyword id="KW-0967">Endosome</keyword>
<keyword id="KW-0325">Glycoprotein</keyword>
<keyword id="KW-0378">Hydrolase</keyword>
<keyword id="KW-0443">Lipid metabolism</keyword>
<keyword id="KW-0472">Membrane</keyword>
<keyword id="KW-1185">Reference proteome</keyword>
<keyword id="KW-0812">Transmembrane</keyword>
<keyword id="KW-1133">Transmembrane helix</keyword>
<comment type="function">
    <text evidence="2 6">Magnesium-independent phospholipid phosphatase that catalyzes the dephosphorylation of a variety of glycerolipid and sphingolipid phosphate esters including phosphatidate/PA, lysophosphatidate/LPA, sphingosine 1-phosphate/S1P and ceramide 1-phosphate/C1P. Has no apparent extracellular phosphatase activity and therefore most probably acts intracellularly. Also acts on N-oleoyl ethanolamine phosphate/N-(9Z-octadecenoyl)-ethanolamine phosphate, a potential physiological compound. Through dephosphorylation of these bioactive lipid mediators produces new bioactive compounds and may regulate signal transduction in different cellular processes (By similarity). Indirectly regulates, for instance, cell cycle G1/S phase transition through its phospholipid phosphatase activity (PubMed:16467304).</text>
</comment>
<comment type="catalytic activity">
    <reaction evidence="2">
        <text>a 1,2-diacyl-sn-glycero-3-phosphate + H2O = a 1,2-diacyl-sn-glycerol + phosphate</text>
        <dbReference type="Rhea" id="RHEA:27429"/>
        <dbReference type="ChEBI" id="CHEBI:15377"/>
        <dbReference type="ChEBI" id="CHEBI:17815"/>
        <dbReference type="ChEBI" id="CHEBI:43474"/>
        <dbReference type="ChEBI" id="CHEBI:58608"/>
        <dbReference type="EC" id="3.1.3.4"/>
    </reaction>
    <physiologicalReaction direction="left-to-right" evidence="2">
        <dbReference type="Rhea" id="RHEA:27430"/>
    </physiologicalReaction>
</comment>
<comment type="catalytic activity">
    <reaction evidence="2">
        <text>1,2-dihexadecanoyl-sn-glycero-3-phosphate + H2O = 1,2-dihexadecanoyl-sn-glycerol + phosphate</text>
        <dbReference type="Rhea" id="RHEA:43236"/>
        <dbReference type="ChEBI" id="CHEBI:15377"/>
        <dbReference type="ChEBI" id="CHEBI:43474"/>
        <dbReference type="ChEBI" id="CHEBI:72859"/>
        <dbReference type="ChEBI" id="CHEBI:82929"/>
    </reaction>
    <physiologicalReaction direction="left-to-right" evidence="2">
        <dbReference type="Rhea" id="RHEA:43237"/>
    </physiologicalReaction>
</comment>
<comment type="catalytic activity">
    <reaction evidence="2">
        <text>1,2-di-(9Z-octadecenoyl)-sn-glycero-3-phosphate + H2O = 1,2-di-(9Z-octadecenoyl)-sn-glycerol + phosphate</text>
        <dbReference type="Rhea" id="RHEA:43244"/>
        <dbReference type="ChEBI" id="CHEBI:15377"/>
        <dbReference type="ChEBI" id="CHEBI:43474"/>
        <dbReference type="ChEBI" id="CHEBI:52333"/>
        <dbReference type="ChEBI" id="CHEBI:74546"/>
    </reaction>
    <physiologicalReaction direction="left-to-right" evidence="2">
        <dbReference type="Rhea" id="RHEA:43245"/>
    </physiologicalReaction>
</comment>
<comment type="catalytic activity">
    <reaction evidence="2">
        <text>a monoacyl-sn-glycero-3-phosphate + H2O = a monoacylglycerol + phosphate</text>
        <dbReference type="Rhea" id="RHEA:46736"/>
        <dbReference type="ChEBI" id="CHEBI:15377"/>
        <dbReference type="ChEBI" id="CHEBI:17408"/>
        <dbReference type="ChEBI" id="CHEBI:43474"/>
        <dbReference type="ChEBI" id="CHEBI:77589"/>
    </reaction>
    <physiologicalReaction direction="left-to-right" evidence="2">
        <dbReference type="Rhea" id="RHEA:46737"/>
    </physiologicalReaction>
</comment>
<comment type="catalytic activity">
    <reaction evidence="2">
        <text>(9Z)-octadecenoyl-sn-glycero-3-phosphate + H2O = (9Z-octadecenoyl)-glycerol + phosphate</text>
        <dbReference type="Rhea" id="RHEA:50884"/>
        <dbReference type="ChEBI" id="CHEBI:15377"/>
        <dbReference type="ChEBI" id="CHEBI:43474"/>
        <dbReference type="ChEBI" id="CHEBI:75937"/>
        <dbReference type="ChEBI" id="CHEBI:84973"/>
    </reaction>
    <physiologicalReaction direction="left-to-right" evidence="2">
        <dbReference type="Rhea" id="RHEA:50885"/>
    </physiologicalReaction>
</comment>
<comment type="catalytic activity">
    <reaction evidence="2">
        <text>sphing-4-enine 1-phosphate + H2O = sphing-4-enine + phosphate</text>
        <dbReference type="Rhea" id="RHEA:27518"/>
        <dbReference type="ChEBI" id="CHEBI:15377"/>
        <dbReference type="ChEBI" id="CHEBI:43474"/>
        <dbReference type="ChEBI" id="CHEBI:57756"/>
        <dbReference type="ChEBI" id="CHEBI:60119"/>
    </reaction>
    <physiologicalReaction direction="left-to-right" evidence="2">
        <dbReference type="Rhea" id="RHEA:27519"/>
    </physiologicalReaction>
</comment>
<comment type="catalytic activity">
    <reaction evidence="2">
        <text>an N-acylsphing-4-enine 1-phosphate + H2O = an N-acylsphing-4-enine + phosphate</text>
        <dbReference type="Rhea" id="RHEA:33743"/>
        <dbReference type="ChEBI" id="CHEBI:15377"/>
        <dbReference type="ChEBI" id="CHEBI:43474"/>
        <dbReference type="ChEBI" id="CHEBI:52639"/>
        <dbReference type="ChEBI" id="CHEBI:57674"/>
    </reaction>
    <physiologicalReaction direction="left-to-right" evidence="2">
        <dbReference type="Rhea" id="RHEA:33744"/>
    </physiologicalReaction>
</comment>
<comment type="catalytic activity">
    <reaction evidence="2">
        <text>N-(octanoyl)-sphing-4-enine-1-phosphate + H2O = N-octanoylsphing-4-enine + phosphate</text>
        <dbReference type="Rhea" id="RHEA:62040"/>
        <dbReference type="ChEBI" id="CHEBI:15377"/>
        <dbReference type="ChEBI" id="CHEBI:43474"/>
        <dbReference type="ChEBI" id="CHEBI:45815"/>
        <dbReference type="ChEBI" id="CHEBI:85376"/>
    </reaction>
    <physiologicalReaction direction="left-to-right" evidence="2">
        <dbReference type="Rhea" id="RHEA:62041"/>
    </physiologicalReaction>
</comment>
<comment type="catalytic activity">
    <reaction evidence="2">
        <text>N-(9Z-octadecenoyl)-ethanolamine phosphate + H2O = N-(9Z-octadecenoyl) ethanolamine + phosphate</text>
        <dbReference type="Rhea" id="RHEA:62160"/>
        <dbReference type="ChEBI" id="CHEBI:15377"/>
        <dbReference type="ChEBI" id="CHEBI:43474"/>
        <dbReference type="ChEBI" id="CHEBI:71466"/>
        <dbReference type="ChEBI" id="CHEBI:145465"/>
    </reaction>
    <physiologicalReaction direction="left-to-right" evidence="2">
        <dbReference type="Rhea" id="RHEA:62161"/>
    </physiologicalReaction>
</comment>
<comment type="activity regulation">
    <text evidence="2">Magnesium-independent phospholipid phosphatase. Insensitive to N-ethylmaleimide.</text>
</comment>
<comment type="pathway">
    <text evidence="2">Lipid metabolism; phospholipid metabolism.</text>
</comment>
<comment type="subunit">
    <text evidence="2">Forms functional homodimers and homooligomers. Can also form heterooligomers with PLPP1 and PLPP3.</text>
</comment>
<comment type="subcellular location">
    <subcellularLocation>
        <location evidence="2">Membrane</location>
        <topology evidence="3">Multi-pass membrane protein</topology>
    </subcellularLocation>
    <subcellularLocation>
        <location evidence="2">Cell membrane</location>
        <topology evidence="3">Multi-pass membrane protein</topology>
    </subcellularLocation>
    <subcellularLocation>
        <location evidence="2">Early endosome membrane</location>
        <topology evidence="3">Multi-pass membrane protein</topology>
    </subcellularLocation>
    <subcellularLocation>
        <location evidence="2">Endoplasmic reticulum membrane</location>
        <topology evidence="3">Multi-pass membrane protein</topology>
    </subcellularLocation>
</comment>
<comment type="tissue specificity">
    <text evidence="5">Expressed in the brain.</text>
</comment>
<comment type="PTM">
    <text evidence="2">N-glycosylated.</text>
</comment>
<comment type="similarity">
    <text evidence="7">Belongs to the PA-phosphatase related phosphoesterase family.</text>
</comment>
<gene>
    <name evidence="8" type="primary">Plpp2</name>
    <name type="synonym">Lpp2</name>
    <name type="synonym">Ppap2c</name>
</gene>
<dbReference type="EC" id="3.1.3.-" evidence="2"/>
<dbReference type="EC" id="3.1.3.4" evidence="2"/>
<dbReference type="EMBL" id="AF503611">
    <property type="protein sequence ID" value="AAM28632.1"/>
    <property type="molecule type" value="mRNA"/>
</dbReference>
<dbReference type="EMBL" id="BC062088">
    <property type="protein sequence ID" value="AAH62088.1"/>
    <property type="molecule type" value="mRNA"/>
</dbReference>
<dbReference type="RefSeq" id="NP_640345.1">
    <property type="nucleotide sequence ID" value="NM_139252.2"/>
</dbReference>
<dbReference type="FunCoup" id="Q8K593">
    <property type="interactions" value="355"/>
</dbReference>
<dbReference type="STRING" id="10116.ENSRNOP00000000193"/>
<dbReference type="GlyCosmos" id="Q8K593">
    <property type="glycosylation" value="2 sites, No reported glycans"/>
</dbReference>
<dbReference type="GlyGen" id="Q8K593">
    <property type="glycosylation" value="2 sites"/>
</dbReference>
<dbReference type="PhosphoSitePlus" id="Q8K593"/>
<dbReference type="PaxDb" id="10116-ENSRNOP00000000193"/>
<dbReference type="Ensembl" id="ENSRNOT00000000193.4">
    <property type="protein sequence ID" value="ENSRNOP00000000193.1"/>
    <property type="gene ID" value="ENSRNOG00000000177.4"/>
</dbReference>
<dbReference type="GeneID" id="246115"/>
<dbReference type="KEGG" id="rno:246115"/>
<dbReference type="UCSC" id="RGD:628893">
    <property type="organism name" value="rat"/>
</dbReference>
<dbReference type="AGR" id="RGD:628893"/>
<dbReference type="CTD" id="8612"/>
<dbReference type="RGD" id="628893">
    <property type="gene designation" value="Plpp2"/>
</dbReference>
<dbReference type="eggNOG" id="KOG3030">
    <property type="taxonomic scope" value="Eukaryota"/>
</dbReference>
<dbReference type="GeneTree" id="ENSGT00940000155885"/>
<dbReference type="HOGENOM" id="CLU_021458_3_1_1"/>
<dbReference type="InParanoid" id="Q8K593"/>
<dbReference type="OrthoDB" id="67397at9989"/>
<dbReference type="PhylomeDB" id="Q8K593"/>
<dbReference type="TreeFam" id="TF316040"/>
<dbReference type="Reactome" id="R-RNO-9845614">
    <property type="pathway name" value="Sphingolipid catabolism"/>
</dbReference>
<dbReference type="UniPathway" id="UPA00085"/>
<dbReference type="PRO" id="PR:Q8K593"/>
<dbReference type="Proteomes" id="UP000002494">
    <property type="component" value="Chromosome 7"/>
</dbReference>
<dbReference type="Bgee" id="ENSRNOG00000000177">
    <property type="expression patterns" value="Expressed in jejunum and 18 other cell types or tissues"/>
</dbReference>
<dbReference type="GO" id="GO:0005901">
    <property type="term" value="C:caveola"/>
    <property type="evidence" value="ECO:0000250"/>
    <property type="project" value="UniProtKB"/>
</dbReference>
<dbReference type="GO" id="GO:0005769">
    <property type="term" value="C:early endosome"/>
    <property type="evidence" value="ECO:0000250"/>
    <property type="project" value="UniProtKB"/>
</dbReference>
<dbReference type="GO" id="GO:0031901">
    <property type="term" value="C:early endosome membrane"/>
    <property type="evidence" value="ECO:0007669"/>
    <property type="project" value="UniProtKB-SubCell"/>
</dbReference>
<dbReference type="GO" id="GO:0005783">
    <property type="term" value="C:endoplasmic reticulum"/>
    <property type="evidence" value="ECO:0000250"/>
    <property type="project" value="UniProtKB"/>
</dbReference>
<dbReference type="GO" id="GO:0005789">
    <property type="term" value="C:endoplasmic reticulum membrane"/>
    <property type="evidence" value="ECO:0007669"/>
    <property type="project" value="UniProtKB-SubCell"/>
</dbReference>
<dbReference type="GO" id="GO:0016020">
    <property type="term" value="C:membrane"/>
    <property type="evidence" value="ECO:0000250"/>
    <property type="project" value="UniProtKB"/>
</dbReference>
<dbReference type="GO" id="GO:0005886">
    <property type="term" value="C:plasma membrane"/>
    <property type="evidence" value="ECO:0000250"/>
    <property type="project" value="UniProtKB"/>
</dbReference>
<dbReference type="GO" id="GO:0106235">
    <property type="term" value="F:ceramide-1-phosphate phosphatase activity"/>
    <property type="evidence" value="ECO:0000250"/>
    <property type="project" value="UniProtKB"/>
</dbReference>
<dbReference type="GO" id="GO:0008195">
    <property type="term" value="F:phosphatidate phosphatase activity"/>
    <property type="evidence" value="ECO:0000250"/>
    <property type="project" value="UniProtKB"/>
</dbReference>
<dbReference type="GO" id="GO:0042392">
    <property type="term" value="F:sphingosine-1-phosphate phosphatase activity"/>
    <property type="evidence" value="ECO:0000250"/>
    <property type="project" value="UniProtKB"/>
</dbReference>
<dbReference type="GO" id="GO:0006672">
    <property type="term" value="P:ceramide metabolic process"/>
    <property type="evidence" value="ECO:0000250"/>
    <property type="project" value="UniProtKB"/>
</dbReference>
<dbReference type="GO" id="GO:0046839">
    <property type="term" value="P:phospholipid dephosphorylation"/>
    <property type="evidence" value="ECO:0000250"/>
    <property type="project" value="UniProtKB"/>
</dbReference>
<dbReference type="GO" id="GO:0006644">
    <property type="term" value="P:phospholipid metabolic process"/>
    <property type="evidence" value="ECO:0000250"/>
    <property type="project" value="UniProtKB"/>
</dbReference>
<dbReference type="GO" id="GO:1902806">
    <property type="term" value="P:regulation of cell cycle G1/S phase transition"/>
    <property type="evidence" value="ECO:0000315"/>
    <property type="project" value="UniProtKB"/>
</dbReference>
<dbReference type="GO" id="GO:0007165">
    <property type="term" value="P:signal transduction"/>
    <property type="evidence" value="ECO:0000318"/>
    <property type="project" value="GO_Central"/>
</dbReference>
<dbReference type="GO" id="GO:0006670">
    <property type="term" value="P:sphingosine metabolic process"/>
    <property type="evidence" value="ECO:0000250"/>
    <property type="project" value="UniProtKB"/>
</dbReference>
<dbReference type="CDD" id="cd03384">
    <property type="entry name" value="PAP2_wunen"/>
    <property type="match status" value="1"/>
</dbReference>
<dbReference type="FunFam" id="1.20.144.10:FF:000016">
    <property type="entry name" value="Phospholipid phosphatase 2"/>
    <property type="match status" value="1"/>
</dbReference>
<dbReference type="Gene3D" id="1.20.144.10">
    <property type="entry name" value="Phosphatidic acid phosphatase type 2/haloperoxidase"/>
    <property type="match status" value="1"/>
</dbReference>
<dbReference type="InterPro" id="IPR036938">
    <property type="entry name" value="P_Acid_Pase_2/haloperoxi_sf"/>
</dbReference>
<dbReference type="InterPro" id="IPR000326">
    <property type="entry name" value="P_Acid_Pase_2/haloperoxidase"/>
</dbReference>
<dbReference type="InterPro" id="IPR043216">
    <property type="entry name" value="PA_PP_rel"/>
</dbReference>
<dbReference type="PANTHER" id="PTHR10165">
    <property type="entry name" value="LIPID PHOSPHATE PHOSPHATASE"/>
    <property type="match status" value="1"/>
</dbReference>
<dbReference type="PANTHER" id="PTHR10165:SF25">
    <property type="entry name" value="PHOSPHOLIPID PHOSPHATASE 2"/>
    <property type="match status" value="1"/>
</dbReference>
<dbReference type="Pfam" id="PF01569">
    <property type="entry name" value="PAP2"/>
    <property type="match status" value="1"/>
</dbReference>
<dbReference type="SMART" id="SM00014">
    <property type="entry name" value="acidPPc"/>
    <property type="match status" value="1"/>
</dbReference>
<dbReference type="SUPFAM" id="SSF48317">
    <property type="entry name" value="Acid phosphatase/Vanadium-dependent haloperoxidase"/>
    <property type="match status" value="1"/>
</dbReference>